<dbReference type="EMBL" id="Y09795">
    <property type="protein sequence ID" value="CAA70928.1"/>
    <property type="molecule type" value="mRNA"/>
</dbReference>
<dbReference type="SMR" id="P91766"/>
<dbReference type="GlyCosmos" id="P91766">
    <property type="glycosylation" value="3 sites, No reported glycans"/>
</dbReference>
<dbReference type="OrthoDB" id="5975154at2759"/>
<dbReference type="GO" id="GO:0045211">
    <property type="term" value="C:postsynaptic membrane"/>
    <property type="evidence" value="ECO:0007669"/>
    <property type="project" value="UniProtKB-SubCell"/>
</dbReference>
<dbReference type="GO" id="GO:0022848">
    <property type="term" value="F:acetylcholine-gated monoatomic cation-selective channel activity"/>
    <property type="evidence" value="ECO:0007669"/>
    <property type="project" value="InterPro"/>
</dbReference>
<dbReference type="GO" id="GO:0004888">
    <property type="term" value="F:transmembrane signaling receptor activity"/>
    <property type="evidence" value="ECO:0007669"/>
    <property type="project" value="InterPro"/>
</dbReference>
<dbReference type="CDD" id="cd19031">
    <property type="entry name" value="LGIC_ECD_nAChR_proto_alpha-like"/>
    <property type="match status" value="1"/>
</dbReference>
<dbReference type="CDD" id="cd19064">
    <property type="entry name" value="LGIC_TM_nAChR"/>
    <property type="match status" value="1"/>
</dbReference>
<dbReference type="FunFam" id="2.70.170.10:FF:000013">
    <property type="entry name" value="Acetylcholine receptor subunit alpha"/>
    <property type="match status" value="1"/>
</dbReference>
<dbReference type="FunFam" id="1.20.58.390:FF:000012">
    <property type="entry name" value="Acetylcholine receptor subunit alpha-like"/>
    <property type="match status" value="1"/>
</dbReference>
<dbReference type="FunFam" id="1.20.58.390:FF:000022">
    <property type="entry name" value="Nicotinic acetylcholine receptor subunit alpha4"/>
    <property type="match status" value="1"/>
</dbReference>
<dbReference type="Gene3D" id="2.70.170.10">
    <property type="entry name" value="Neurotransmitter-gated ion-channel ligand-binding domain"/>
    <property type="match status" value="1"/>
</dbReference>
<dbReference type="Gene3D" id="1.20.58.390">
    <property type="entry name" value="Neurotransmitter-gated ion-channel transmembrane domain"/>
    <property type="match status" value="2"/>
</dbReference>
<dbReference type="InterPro" id="IPR006202">
    <property type="entry name" value="Neur_chan_lig-bd"/>
</dbReference>
<dbReference type="InterPro" id="IPR036734">
    <property type="entry name" value="Neur_chan_lig-bd_sf"/>
</dbReference>
<dbReference type="InterPro" id="IPR006201">
    <property type="entry name" value="Neur_channel"/>
</dbReference>
<dbReference type="InterPro" id="IPR036719">
    <property type="entry name" value="Neuro-gated_channel_TM_sf"/>
</dbReference>
<dbReference type="InterPro" id="IPR038050">
    <property type="entry name" value="Neuro_actylchol_rec"/>
</dbReference>
<dbReference type="InterPro" id="IPR006029">
    <property type="entry name" value="Neurotrans-gated_channel_TM"/>
</dbReference>
<dbReference type="InterPro" id="IPR018000">
    <property type="entry name" value="Neurotransmitter_ion_chnl_CS"/>
</dbReference>
<dbReference type="InterPro" id="IPR002394">
    <property type="entry name" value="Nicotinic_acetylcholine_rcpt"/>
</dbReference>
<dbReference type="NCBIfam" id="TIGR00860">
    <property type="entry name" value="LIC"/>
    <property type="match status" value="1"/>
</dbReference>
<dbReference type="PANTHER" id="PTHR18945">
    <property type="entry name" value="NEUROTRANSMITTER GATED ION CHANNEL"/>
    <property type="match status" value="1"/>
</dbReference>
<dbReference type="Pfam" id="PF02931">
    <property type="entry name" value="Neur_chan_LBD"/>
    <property type="match status" value="1"/>
</dbReference>
<dbReference type="Pfam" id="PF02932">
    <property type="entry name" value="Neur_chan_memb"/>
    <property type="match status" value="1"/>
</dbReference>
<dbReference type="PRINTS" id="PR00254">
    <property type="entry name" value="NICOTINICR"/>
</dbReference>
<dbReference type="PRINTS" id="PR00252">
    <property type="entry name" value="NRIONCHANNEL"/>
</dbReference>
<dbReference type="SUPFAM" id="SSF90112">
    <property type="entry name" value="Neurotransmitter-gated ion-channel transmembrane pore"/>
    <property type="match status" value="1"/>
</dbReference>
<dbReference type="SUPFAM" id="SSF63712">
    <property type="entry name" value="Nicotinic receptor ligand binding domain-like"/>
    <property type="match status" value="1"/>
</dbReference>
<dbReference type="PROSITE" id="PS00236">
    <property type="entry name" value="NEUROTR_ION_CHANNEL"/>
    <property type="match status" value="1"/>
</dbReference>
<protein>
    <recommendedName>
        <fullName>Acetylcholine receptor subunit alpha-like</fullName>
    </recommendedName>
    <alternativeName>
        <fullName>MARA1</fullName>
    </alternativeName>
</protein>
<sequence length="516" mass="58720">MRSVTKYYLHGVVLFATGCAGNPDAKRLYDDLLSNYNKLVRPVLNVSDALTVRIKLKLSQLIDVNLKNQIMTTNLWVEQSWYDYKLSWEPREYGGVEMLHVPSDHIWRPDIVLYNNADGNFEVTLATKATLNYTGRVEWRPPAIYKSSCEIDVEYFPFDQQTCVMKFGSWTYDGFQVDLRHIDEVRGTNVVELGVDLSEFYTSVEWDILEVPAVRNEKFYTCCDEPYLDITFNITMRRKTLFYTVNLIIPCMGISFLTVLVFYLPSDSGEKVSLSISILLSLTVFFLLLAEIIPPTSLVVPLLGKFVLFTMILDTFSICVTVVVLNVHFRSPQTHTMSPWVRRVFIHVLPRLLVMRRPHYRLDPHRSRFAGLVTGAGETTLWDEGSPGVPAPPRPPPCAPPLAPCAACAPAEAPALCDALRRWHRCPELHKAIDGINYIADQTRKEEESTRVKEDWKYVAMVLDRPFLWIFTLAVVVGSAGIILQAPTLYDERAPIDVRLSEIAYTAAKPRPPPPR</sequence>
<proteinExistence type="evidence at transcript level"/>
<reference key="1">
    <citation type="journal article" date="1998" name="Eur. J. Neurosci.">
        <title>Characterization of a nicotinic acetylcholine receptor from the insect Manduca sexta.</title>
        <authorList>
            <person name="Eastham H.M."/>
            <person name="Lind R.J."/>
            <person name="Eastlake J.L."/>
            <person name="Clarke B.S."/>
            <person name="Towner P."/>
            <person name="Reynolds S.E."/>
            <person name="Wolstenholme A.J."/>
            <person name="Wonnacott S."/>
        </authorList>
    </citation>
    <scope>NUCLEOTIDE SEQUENCE [MRNA]</scope>
</reference>
<keyword id="KW-1003">Cell membrane</keyword>
<keyword id="KW-1015">Disulfide bond</keyword>
<keyword id="KW-0325">Glycoprotein</keyword>
<keyword id="KW-0407">Ion channel</keyword>
<keyword id="KW-0406">Ion transport</keyword>
<keyword id="KW-1071">Ligand-gated ion channel</keyword>
<keyword id="KW-0472">Membrane</keyword>
<keyword id="KW-0628">Postsynaptic cell membrane</keyword>
<keyword id="KW-0675">Receptor</keyword>
<keyword id="KW-0732">Signal</keyword>
<keyword id="KW-0770">Synapse</keyword>
<keyword id="KW-0812">Transmembrane</keyword>
<keyword id="KW-1133">Transmembrane helix</keyword>
<keyword id="KW-0813">Transport</keyword>
<gene>
    <name type="primary">ARA1</name>
</gene>
<accession>P91766</accession>
<name>ACH1_MANSE</name>
<comment type="function">
    <text evidence="1">After binding acetylcholine, the AChR responds by an extensive change in conformation that affects all subunits and leads to opening of an ion-conducting channel across the plasma membrane.</text>
</comment>
<comment type="subcellular location">
    <subcellularLocation>
        <location evidence="1">Postsynaptic cell membrane</location>
        <topology evidence="1">Multi-pass membrane protein</topology>
    </subcellularLocation>
    <subcellularLocation>
        <location evidence="1">Cell membrane</location>
        <topology evidence="1">Multi-pass membrane protein</topology>
    </subcellularLocation>
</comment>
<comment type="similarity">
    <text evidence="3">Belongs to the ligand-gated ion channel (TC 1.A.9) family. Acetylcholine receptor (TC 1.A.9.1) subfamily.</text>
</comment>
<organism>
    <name type="scientific">Manduca sexta</name>
    <name type="common">Tobacco hawkmoth</name>
    <name type="synonym">Tobacco hornworm</name>
    <dbReference type="NCBI Taxonomy" id="7130"/>
    <lineage>
        <taxon>Eukaryota</taxon>
        <taxon>Metazoa</taxon>
        <taxon>Ecdysozoa</taxon>
        <taxon>Arthropoda</taxon>
        <taxon>Hexapoda</taxon>
        <taxon>Insecta</taxon>
        <taxon>Pterygota</taxon>
        <taxon>Neoptera</taxon>
        <taxon>Endopterygota</taxon>
        <taxon>Lepidoptera</taxon>
        <taxon>Glossata</taxon>
        <taxon>Ditrysia</taxon>
        <taxon>Bombycoidea</taxon>
        <taxon>Sphingidae</taxon>
        <taxon>Sphinginae</taxon>
        <taxon>Sphingini</taxon>
        <taxon>Manduca</taxon>
    </lineage>
</organism>
<feature type="signal peptide" evidence="2">
    <location>
        <begin position="1"/>
        <end position="21"/>
    </location>
</feature>
<feature type="chain" id="PRO_0000000303" description="Acetylcholine receptor subunit alpha-like">
    <location>
        <begin position="22"/>
        <end position="516"/>
    </location>
</feature>
<feature type="topological domain" description="Extracellular" evidence="2">
    <location>
        <begin position="22"/>
        <end position="243"/>
    </location>
</feature>
<feature type="transmembrane region" description="Helical" evidence="2">
    <location>
        <begin position="244"/>
        <end position="264"/>
    </location>
</feature>
<feature type="transmembrane region" description="Helical" evidence="2">
    <location>
        <begin position="274"/>
        <end position="294"/>
    </location>
</feature>
<feature type="transmembrane region" description="Helical" evidence="2">
    <location>
        <begin position="306"/>
        <end position="326"/>
    </location>
</feature>
<feature type="topological domain" description="Cytoplasmic" evidence="2">
    <location>
        <begin position="327"/>
        <end position="465"/>
    </location>
</feature>
<feature type="transmembrane region" description="Helical" evidence="2">
    <location>
        <begin position="466"/>
        <end position="486"/>
    </location>
</feature>
<feature type="glycosylation site" description="N-linked (GlcNAc...) asparagine" evidence="2">
    <location>
        <position position="45"/>
    </location>
</feature>
<feature type="glycosylation site" description="N-linked (GlcNAc...) asparagine" evidence="2">
    <location>
        <position position="132"/>
    </location>
</feature>
<feature type="glycosylation site" description="N-linked (GlcNAc...) asparagine" evidence="2">
    <location>
        <position position="233"/>
    </location>
</feature>
<feature type="disulfide bond" evidence="1">
    <location>
        <begin position="149"/>
        <end position="163"/>
    </location>
</feature>
<feature type="disulfide bond" description="Associated with receptor activation" evidence="1">
    <location>
        <begin position="222"/>
        <end position="223"/>
    </location>
</feature>
<evidence type="ECO:0000250" key="1"/>
<evidence type="ECO:0000255" key="2"/>
<evidence type="ECO:0000305" key="3"/>